<organism>
    <name type="scientific">Zymomonas mobilis subsp. mobilis (strain ATCC 10988 / DSM 424 / LMG 404 / NCIMB 8938 / NRRL B-806 / ZM1)</name>
    <dbReference type="NCBI Taxonomy" id="555217"/>
    <lineage>
        <taxon>Bacteria</taxon>
        <taxon>Pseudomonadati</taxon>
        <taxon>Pseudomonadota</taxon>
        <taxon>Alphaproteobacteria</taxon>
        <taxon>Sphingomonadales</taxon>
        <taxon>Zymomonadaceae</taxon>
        <taxon>Zymomonas</taxon>
    </lineage>
</organism>
<gene>
    <name type="primary">grp</name>
    <name type="ordered locus">Zmob_0988</name>
</gene>
<proteinExistence type="predicted"/>
<feature type="chain" id="PRO_0000414235" description="Glutamate uptake regulatory protein">
    <location>
        <begin position="1"/>
        <end position="164"/>
    </location>
</feature>
<feature type="domain" description="HTH asnC-type" evidence="1">
    <location>
        <begin position="5"/>
        <end position="66"/>
    </location>
</feature>
<feature type="DNA-binding region" description="H-T-H motif" evidence="1">
    <location>
        <begin position="24"/>
        <end position="43"/>
    </location>
</feature>
<feature type="sequence conflict" description="In Ref. 1; CAA58841." evidence="3" ref="1">
    <original>D</original>
    <variation>V</variation>
    <location>
        <position position="14"/>
    </location>
</feature>
<feature type="sequence conflict" description="In Ref. 1; CAA58841." evidence="3" ref="1">
    <original>H</original>
    <variation>D</variation>
    <location>
        <position position="18"/>
    </location>
</feature>
<feature type="sequence conflict" description="In Ref. 1; CAA58841." evidence="3" ref="1">
    <original>RCAEHSQ</original>
    <variation>TVRNIPN</variation>
    <location>
        <begin position="74"/>
        <end position="80"/>
    </location>
</feature>
<feature type="sequence conflict" description="In Ref. 1; CAA58841." evidence="3" ref="1">
    <original>D</original>
    <variation>H</variation>
    <location>
        <position position="121"/>
    </location>
</feature>
<feature type="sequence conflict" description="In Ref. 1; CAA58841." evidence="3" ref="1">
    <original>V</original>
    <variation>A</variation>
    <location>
        <position position="164"/>
    </location>
</feature>
<sequence>MIRKLDDFDIKILDLLQHDATATMAELSEKTGLSANACWRRIRLLEADGVIKNRVTLLDPQKIGLGITVFVCIRCAEHSQDWLDNFLQIVNESPEVIEFYRLAGDIDYLLKLQVASISEYDRLYKKLVSRVKLTDVSAIFSMEELKHSTILPLPETSDKAERKV</sequence>
<comment type="function">
    <text evidence="2">Represses the secondary, H(+)-coupled glutamate uptake system (Gluemp) genes.</text>
</comment>
<accession>F8DT92</accession>
<accession>P74996</accession>
<accession>Q5NQC4</accession>
<protein>
    <recommendedName>
        <fullName>Glutamate uptake regulatory protein</fullName>
    </recommendedName>
</protein>
<dbReference type="EMBL" id="X84019">
    <property type="protein sequence ID" value="CAA58841.1"/>
    <property type="molecule type" value="Genomic_DNA"/>
</dbReference>
<dbReference type="EMBL" id="CP002850">
    <property type="protein sequence ID" value="AEH62823.1"/>
    <property type="molecule type" value="Genomic_DNA"/>
</dbReference>
<dbReference type="PIR" id="S52279">
    <property type="entry name" value="S52279"/>
</dbReference>
<dbReference type="RefSeq" id="WP_014500818.1">
    <property type="nucleotide sequence ID" value="NC_017262.1"/>
</dbReference>
<dbReference type="SMR" id="F8DT92"/>
<dbReference type="KEGG" id="zmm:Zmob_0988"/>
<dbReference type="eggNOG" id="COG1522">
    <property type="taxonomic scope" value="Bacteria"/>
</dbReference>
<dbReference type="HOGENOM" id="CLU_091233_0_2_5"/>
<dbReference type="OrthoDB" id="9813313at2"/>
<dbReference type="Proteomes" id="UP000001494">
    <property type="component" value="Chromosome"/>
</dbReference>
<dbReference type="GO" id="GO:0005829">
    <property type="term" value="C:cytosol"/>
    <property type="evidence" value="ECO:0007669"/>
    <property type="project" value="TreeGrafter"/>
</dbReference>
<dbReference type="GO" id="GO:0043565">
    <property type="term" value="F:sequence-specific DNA binding"/>
    <property type="evidence" value="ECO:0007669"/>
    <property type="project" value="InterPro"/>
</dbReference>
<dbReference type="GO" id="GO:0043200">
    <property type="term" value="P:response to amino acid"/>
    <property type="evidence" value="ECO:0007669"/>
    <property type="project" value="TreeGrafter"/>
</dbReference>
<dbReference type="CDD" id="cd00090">
    <property type="entry name" value="HTH_ARSR"/>
    <property type="match status" value="1"/>
</dbReference>
<dbReference type="Gene3D" id="3.30.70.920">
    <property type="match status" value="1"/>
</dbReference>
<dbReference type="Gene3D" id="1.10.10.10">
    <property type="entry name" value="Winged helix-like DNA-binding domain superfamily/Winged helix DNA-binding domain"/>
    <property type="match status" value="1"/>
</dbReference>
<dbReference type="InterPro" id="IPR011991">
    <property type="entry name" value="ArsR-like_HTH"/>
</dbReference>
<dbReference type="InterPro" id="IPR000485">
    <property type="entry name" value="AsnC-type_HTH_dom"/>
</dbReference>
<dbReference type="InterPro" id="IPR011008">
    <property type="entry name" value="Dimeric_a/b-barrel"/>
</dbReference>
<dbReference type="InterPro" id="IPR019888">
    <property type="entry name" value="Tscrpt_reg_AsnC-like"/>
</dbReference>
<dbReference type="InterPro" id="IPR019887">
    <property type="entry name" value="Tscrpt_reg_AsnC/Lrp_C"/>
</dbReference>
<dbReference type="InterPro" id="IPR019885">
    <property type="entry name" value="Tscrpt_reg_HTH_AsnC-type_CS"/>
</dbReference>
<dbReference type="InterPro" id="IPR036388">
    <property type="entry name" value="WH-like_DNA-bd_sf"/>
</dbReference>
<dbReference type="InterPro" id="IPR036390">
    <property type="entry name" value="WH_DNA-bd_sf"/>
</dbReference>
<dbReference type="PANTHER" id="PTHR30154:SF17">
    <property type="entry name" value="DNA-BINDING TRANSCRIPTIONAL ACTIVATOR DECR"/>
    <property type="match status" value="1"/>
</dbReference>
<dbReference type="PANTHER" id="PTHR30154">
    <property type="entry name" value="LEUCINE-RESPONSIVE REGULATORY PROTEIN"/>
    <property type="match status" value="1"/>
</dbReference>
<dbReference type="Pfam" id="PF01037">
    <property type="entry name" value="AsnC_trans_reg"/>
    <property type="match status" value="1"/>
</dbReference>
<dbReference type="Pfam" id="PF13412">
    <property type="entry name" value="HTH_24"/>
    <property type="match status" value="1"/>
</dbReference>
<dbReference type="PRINTS" id="PR00033">
    <property type="entry name" value="HTHASNC"/>
</dbReference>
<dbReference type="SMART" id="SM00344">
    <property type="entry name" value="HTH_ASNC"/>
    <property type="match status" value="1"/>
</dbReference>
<dbReference type="SUPFAM" id="SSF54909">
    <property type="entry name" value="Dimeric alpha+beta barrel"/>
    <property type="match status" value="1"/>
</dbReference>
<dbReference type="SUPFAM" id="SSF46785">
    <property type="entry name" value="Winged helix' DNA-binding domain"/>
    <property type="match status" value="1"/>
</dbReference>
<dbReference type="PROSITE" id="PS00519">
    <property type="entry name" value="HTH_ASNC_1"/>
    <property type="match status" value="1"/>
</dbReference>
<dbReference type="PROSITE" id="PS50956">
    <property type="entry name" value="HTH_ASNC_2"/>
    <property type="match status" value="1"/>
</dbReference>
<name>GRP_ZYMMA</name>
<keyword id="KW-0238">DNA-binding</keyword>
<keyword id="KW-0678">Repressor</keyword>
<keyword id="KW-0804">Transcription</keyword>
<keyword id="KW-0805">Transcription regulation</keyword>
<reference key="1">
    <citation type="journal article" date="1995" name="J. Bacteriol.">
        <title>The glutamate uptake regulatory protein (Grp) of Zymomonas mobilis and its relation to the global regulator Lrp of Escherichia coli.</title>
        <authorList>
            <person name="Peekhaus N."/>
            <person name="Tolner B."/>
            <person name="Poolman B."/>
            <person name="Kramer R."/>
        </authorList>
    </citation>
    <scope>NUCLEOTIDE SEQUENCE [GENOMIC DNA]</scope>
    <scope>FUNCTION</scope>
    <source>
        <strain>ATCC 10988 / DSM 424 / CCUG 17860 / LMG 404 / NCIMB 8938 / NRRL B-806 / ZM1</strain>
    </source>
</reference>
<reference key="2">
    <citation type="journal article" date="2011" name="J. Bacteriol.">
        <title>Genome sequence of the ethanol-producing Zymomonas mobilis subsp. mobilis lectotype strain ATCC 10988.</title>
        <authorList>
            <person name="Pappas K.M."/>
            <person name="Kouvelis V.N."/>
            <person name="Saunders E."/>
            <person name="Brettin T.S."/>
            <person name="Bruce D."/>
            <person name="Detter C."/>
            <person name="Balakireva M."/>
            <person name="Han C.S."/>
            <person name="Savvakis G."/>
            <person name="Kyrpides N.C."/>
            <person name="Typas M.A."/>
        </authorList>
    </citation>
    <scope>NUCLEOTIDE SEQUENCE [LARGE SCALE GENOMIC DNA]</scope>
    <source>
        <strain>ATCC 10988 / DSM 424 / CCUG 17860 / LMG 404 / NCIMB 8938 / NRRL B-806 / ZM1</strain>
    </source>
</reference>
<evidence type="ECO:0000255" key="1">
    <source>
        <dbReference type="PROSITE-ProRule" id="PRU00319"/>
    </source>
</evidence>
<evidence type="ECO:0000269" key="2">
    <source>
    </source>
</evidence>
<evidence type="ECO:0000305" key="3"/>